<name>NEMS_CAMFO</name>
<gene>
    <name evidence="7" type="ORF">EAG_03924</name>
</gene>
<dbReference type="EMBL" id="GL436457">
    <property type="protein sequence ID" value="EFN71919.1"/>
    <property type="molecule type" value="Genomic_DNA"/>
</dbReference>
<dbReference type="EnsemblMetazoa" id="XM_011252649.3">
    <property type="protein sequence ID" value="XP_011250951.1"/>
    <property type="gene ID" value="LOC105248075"/>
</dbReference>
<dbReference type="KEGG" id="cfo:105248075"/>
<dbReference type="CTD" id="44324"/>
<dbReference type="OMA" id="IWDVRDM"/>
<dbReference type="OrthoDB" id="6355109at2759"/>
<dbReference type="Proteomes" id="UP000000311">
    <property type="component" value="Unassembled WGS sequence"/>
</dbReference>
<dbReference type="GO" id="GO:0005576">
    <property type="term" value="C:extracellular region"/>
    <property type="evidence" value="ECO:0007669"/>
    <property type="project" value="UniProtKB-SubCell"/>
</dbReference>
<dbReference type="GO" id="GO:0007218">
    <property type="term" value="P:neuropeptide signaling pathway"/>
    <property type="evidence" value="ECO:0007669"/>
    <property type="project" value="UniProtKB-KW"/>
</dbReference>
<accession>E2A3M7</accession>
<proteinExistence type="evidence at protein level"/>
<protein>
    <recommendedName>
        <fullName evidence="4">Myosuppressin</fullName>
    </recommendedName>
</protein>
<comment type="function">
    <text evidence="1">Myoinhibiting neuropeptide.</text>
</comment>
<comment type="subcellular location">
    <subcellularLocation>
        <location evidence="6">Secreted</location>
    </subcellularLocation>
</comment>
<comment type="tissue specificity">
    <text evidence="3">Expressed throughout the nervous system (at protein level).</text>
</comment>
<comment type="mass spectrometry" mass="1257.63" method="MALDI" evidence="3"/>
<comment type="similarity">
    <text evidence="5">Belongs to the myosuppressin family.</text>
</comment>
<feature type="signal peptide" evidence="2">
    <location>
        <begin position="1"/>
        <end position="24"/>
    </location>
</feature>
<feature type="propeptide" id="PRO_0000434222" evidence="6">
    <location>
        <begin position="25"/>
        <end position="80"/>
    </location>
</feature>
<feature type="peptide" id="PRO_0000434223" description="Myosuppressin" evidence="3">
    <location>
        <begin position="81"/>
        <end position="90"/>
    </location>
</feature>
<feature type="modified residue" description="Pyrrolidone carboxylic acid" evidence="3">
    <location>
        <position position="81"/>
    </location>
</feature>
<feature type="modified residue" description="Phenylalanine amide" evidence="3">
    <location>
        <position position="90"/>
    </location>
</feature>
<organism>
    <name type="scientific">Camponotus floridanus</name>
    <name type="common">Florida carpenter ant</name>
    <dbReference type="NCBI Taxonomy" id="104421"/>
    <lineage>
        <taxon>Eukaryota</taxon>
        <taxon>Metazoa</taxon>
        <taxon>Ecdysozoa</taxon>
        <taxon>Arthropoda</taxon>
        <taxon>Hexapoda</taxon>
        <taxon>Insecta</taxon>
        <taxon>Pterygota</taxon>
        <taxon>Neoptera</taxon>
        <taxon>Endopterygota</taxon>
        <taxon>Hymenoptera</taxon>
        <taxon>Apocrita</taxon>
        <taxon>Aculeata</taxon>
        <taxon>Formicoidea</taxon>
        <taxon>Formicidae</taxon>
        <taxon>Formicinae</taxon>
        <taxon>Camponotus</taxon>
    </lineage>
</organism>
<sequence length="94" mass="10997">MMSPTLMILISITTMAILSGESFGAMPAQCNSEFLEELPPRLRKICVAIARIWDAREMNDFVDDREYRENLPRYDSSVKRQDVDHVFLRFGKRR</sequence>
<reference key="1">
    <citation type="journal article" date="2010" name="Science">
        <title>Genomic comparison of the ants Camponotus floridanus and Harpegnathos saltator.</title>
        <authorList>
            <person name="Bonasio R."/>
            <person name="Zhang G."/>
            <person name="Ye C."/>
            <person name="Mutti N.S."/>
            <person name="Fang X."/>
            <person name="Qin N."/>
            <person name="Donahue G."/>
            <person name="Yang P."/>
            <person name="Li Q."/>
            <person name="Li C."/>
            <person name="Zhang P."/>
            <person name="Huang Z."/>
            <person name="Berger S.L."/>
            <person name="Reinberg D."/>
            <person name="Wang J."/>
            <person name="Liebig J."/>
        </authorList>
    </citation>
    <scope>NUCLEOTIDE SEQUENCE [LARGE SCALE GENOMIC DNA]</scope>
</reference>
<reference evidence="5" key="2">
    <citation type="journal article" date="2015" name="J. Proteome Res.">
        <title>Neuropeptidomics of the carpenter ant Camponotus floridanus.</title>
        <authorList>
            <person name="Schmitt F."/>
            <person name="Vanselow J.T."/>
            <person name="Schlosser A."/>
            <person name="Kahnt J."/>
            <person name="Roessler W."/>
            <person name="Wegener C."/>
        </authorList>
    </citation>
    <scope>PROTEIN SEQUENCE OF 81-90</scope>
    <scope>TISSUE SPECIFICITY</scope>
    <scope>MASS SPECTROMETRY</scope>
    <scope>IDENTIFICATION BY MASS SPECTROMETRY</scope>
    <scope>AMIDATION AT PHE-90</scope>
    <scope>PYROGLUTAMATE FORMATION AT GLN-81</scope>
</reference>
<keyword id="KW-0027">Amidation</keyword>
<keyword id="KW-0165">Cleavage on pair of basic residues</keyword>
<keyword id="KW-0903">Direct protein sequencing</keyword>
<keyword id="KW-0527">Neuropeptide</keyword>
<keyword id="KW-0873">Pyrrolidone carboxylic acid</keyword>
<keyword id="KW-1185">Reference proteome</keyword>
<keyword id="KW-0964">Secreted</keyword>
<keyword id="KW-0732">Signal</keyword>
<evidence type="ECO:0000250" key="1">
    <source>
        <dbReference type="UniProtKB" id="P61849"/>
    </source>
</evidence>
<evidence type="ECO:0000255" key="2"/>
<evidence type="ECO:0000269" key="3">
    <source>
    </source>
</evidence>
<evidence type="ECO:0000303" key="4">
    <source>
    </source>
</evidence>
<evidence type="ECO:0000305" key="5"/>
<evidence type="ECO:0000305" key="6">
    <source>
    </source>
</evidence>
<evidence type="ECO:0000312" key="7">
    <source>
        <dbReference type="EMBL" id="EFN71919.1"/>
    </source>
</evidence>